<proteinExistence type="inferred from homology"/>
<dbReference type="EC" id="6.1.1.4" evidence="1"/>
<dbReference type="EMBL" id="AP009351">
    <property type="protein sequence ID" value="BAF67923.1"/>
    <property type="molecule type" value="Genomic_DNA"/>
</dbReference>
<dbReference type="RefSeq" id="WP_001549041.1">
    <property type="nucleotide sequence ID" value="NZ_JBBIAE010000009.1"/>
</dbReference>
<dbReference type="SMR" id="A6QHU1"/>
<dbReference type="KEGG" id="sae:NWMN_1651"/>
<dbReference type="HOGENOM" id="CLU_004427_0_0_9"/>
<dbReference type="Proteomes" id="UP000006386">
    <property type="component" value="Chromosome"/>
</dbReference>
<dbReference type="GO" id="GO:0005829">
    <property type="term" value="C:cytosol"/>
    <property type="evidence" value="ECO:0007669"/>
    <property type="project" value="TreeGrafter"/>
</dbReference>
<dbReference type="GO" id="GO:0002161">
    <property type="term" value="F:aminoacyl-tRNA deacylase activity"/>
    <property type="evidence" value="ECO:0007669"/>
    <property type="project" value="InterPro"/>
</dbReference>
<dbReference type="GO" id="GO:0005524">
    <property type="term" value="F:ATP binding"/>
    <property type="evidence" value="ECO:0007669"/>
    <property type="project" value="UniProtKB-UniRule"/>
</dbReference>
<dbReference type="GO" id="GO:0004823">
    <property type="term" value="F:leucine-tRNA ligase activity"/>
    <property type="evidence" value="ECO:0007669"/>
    <property type="project" value="UniProtKB-UniRule"/>
</dbReference>
<dbReference type="GO" id="GO:0006429">
    <property type="term" value="P:leucyl-tRNA aminoacylation"/>
    <property type="evidence" value="ECO:0007669"/>
    <property type="project" value="UniProtKB-UniRule"/>
</dbReference>
<dbReference type="CDD" id="cd07958">
    <property type="entry name" value="Anticodon_Ia_Leu_BEm"/>
    <property type="match status" value="1"/>
</dbReference>
<dbReference type="CDD" id="cd00812">
    <property type="entry name" value="LeuRS_core"/>
    <property type="match status" value="1"/>
</dbReference>
<dbReference type="FunFam" id="1.10.730.10:FF:000012">
    <property type="entry name" value="Leucine--tRNA ligase"/>
    <property type="match status" value="1"/>
</dbReference>
<dbReference type="FunFam" id="1.10.730.10:FF:000018">
    <property type="entry name" value="Leucine--tRNA ligase"/>
    <property type="match status" value="1"/>
</dbReference>
<dbReference type="FunFam" id="3.10.20.590:FF:000001">
    <property type="entry name" value="Leucine--tRNA ligase"/>
    <property type="match status" value="1"/>
</dbReference>
<dbReference type="FunFam" id="3.40.50.620:FF:000056">
    <property type="entry name" value="Leucine--tRNA ligase"/>
    <property type="match status" value="1"/>
</dbReference>
<dbReference type="FunFam" id="3.40.50.620:FF:000077">
    <property type="entry name" value="Leucine--tRNA ligase"/>
    <property type="match status" value="1"/>
</dbReference>
<dbReference type="Gene3D" id="3.10.20.590">
    <property type="match status" value="1"/>
</dbReference>
<dbReference type="Gene3D" id="3.40.50.620">
    <property type="entry name" value="HUPs"/>
    <property type="match status" value="2"/>
</dbReference>
<dbReference type="Gene3D" id="1.10.730.10">
    <property type="entry name" value="Isoleucyl-tRNA Synthetase, Domain 1"/>
    <property type="match status" value="1"/>
</dbReference>
<dbReference type="HAMAP" id="MF_00049_B">
    <property type="entry name" value="Leu_tRNA_synth_B"/>
    <property type="match status" value="1"/>
</dbReference>
<dbReference type="InterPro" id="IPR001412">
    <property type="entry name" value="aa-tRNA-synth_I_CS"/>
</dbReference>
<dbReference type="InterPro" id="IPR002300">
    <property type="entry name" value="aa-tRNA-synth_Ia"/>
</dbReference>
<dbReference type="InterPro" id="IPR002302">
    <property type="entry name" value="Leu-tRNA-ligase"/>
</dbReference>
<dbReference type="InterPro" id="IPR025709">
    <property type="entry name" value="Leu_tRNA-synth_edit"/>
</dbReference>
<dbReference type="InterPro" id="IPR013155">
    <property type="entry name" value="M/V/L/I-tRNA-synth_anticd-bd"/>
</dbReference>
<dbReference type="InterPro" id="IPR015413">
    <property type="entry name" value="Methionyl/Leucyl_tRNA_Synth"/>
</dbReference>
<dbReference type="InterPro" id="IPR014729">
    <property type="entry name" value="Rossmann-like_a/b/a_fold"/>
</dbReference>
<dbReference type="InterPro" id="IPR009080">
    <property type="entry name" value="tRNAsynth_Ia_anticodon-bd"/>
</dbReference>
<dbReference type="InterPro" id="IPR009008">
    <property type="entry name" value="Val/Leu/Ile-tRNA-synth_edit"/>
</dbReference>
<dbReference type="NCBIfam" id="TIGR00396">
    <property type="entry name" value="leuS_bact"/>
    <property type="match status" value="1"/>
</dbReference>
<dbReference type="PANTHER" id="PTHR43740:SF2">
    <property type="entry name" value="LEUCINE--TRNA LIGASE, MITOCHONDRIAL"/>
    <property type="match status" value="1"/>
</dbReference>
<dbReference type="PANTHER" id="PTHR43740">
    <property type="entry name" value="LEUCYL-TRNA SYNTHETASE"/>
    <property type="match status" value="1"/>
</dbReference>
<dbReference type="Pfam" id="PF08264">
    <property type="entry name" value="Anticodon_1"/>
    <property type="match status" value="1"/>
</dbReference>
<dbReference type="Pfam" id="PF00133">
    <property type="entry name" value="tRNA-synt_1"/>
    <property type="match status" value="1"/>
</dbReference>
<dbReference type="Pfam" id="PF13603">
    <property type="entry name" value="tRNA-synt_1_2"/>
    <property type="match status" value="1"/>
</dbReference>
<dbReference type="Pfam" id="PF09334">
    <property type="entry name" value="tRNA-synt_1g"/>
    <property type="match status" value="1"/>
</dbReference>
<dbReference type="PRINTS" id="PR00985">
    <property type="entry name" value="TRNASYNTHLEU"/>
</dbReference>
<dbReference type="SUPFAM" id="SSF47323">
    <property type="entry name" value="Anticodon-binding domain of a subclass of class I aminoacyl-tRNA synthetases"/>
    <property type="match status" value="1"/>
</dbReference>
<dbReference type="SUPFAM" id="SSF52374">
    <property type="entry name" value="Nucleotidylyl transferase"/>
    <property type="match status" value="1"/>
</dbReference>
<dbReference type="SUPFAM" id="SSF50677">
    <property type="entry name" value="ValRS/IleRS/LeuRS editing domain"/>
    <property type="match status" value="1"/>
</dbReference>
<dbReference type="PROSITE" id="PS00178">
    <property type="entry name" value="AA_TRNA_LIGASE_I"/>
    <property type="match status" value="1"/>
</dbReference>
<protein>
    <recommendedName>
        <fullName evidence="1">Leucine--tRNA ligase</fullName>
        <ecNumber evidence="1">6.1.1.4</ecNumber>
    </recommendedName>
    <alternativeName>
        <fullName evidence="1">Leucyl-tRNA synthetase</fullName>
        <shortName evidence="1">LeuRS</shortName>
    </alternativeName>
</protein>
<sequence>MLNYNHNQIEKKWQDYWDENKTFKTNDNLGQKKFYALDMFPYPSGAGLHVGHPEGYTATDIISRYKRMQGYNVLHPMGWDAFGLPAEQYALDTGNDPREFTKKNIQTFKRQIKELGFSYDWDREVNTTDPEYYKWTQWIFIQLYNKGLAYVDEVAVNWCPALGTVLSNEEVIDGVSERGGHPVYRKPMKQWVLKITEYADQLLADLDDLDWPESLKDMQRNWIGRSEGAKVSFDVDNTEGKVEVFTTRPDTIYGASFLVLSPEHALVNSITTDEYKEKVKAYQTEASKKSDLERTDLAKDKSGVFTGAYATNPLSGEKVQIWIADYVLSTYGTGAIMAVPAHDDRDYEFAKKFDLPIIEVIEGGNVEEAAYTGEGKHINSGELDGLENEAAITKAIQLLEQKGAGEKKVNYKLRDWLFSRQRYWGEPIPVIHWEDGTMTTVPEEELPLLLPETDEIKPSGTGESPLANIDSFVNVVDEKTGMKGRRETNTMPQWAGSCWYYLRYIDPKNENMLADPEKLKHWLPVDLYIGGVEHAVLHLLYARFWHKVLYDLAIVPTKEPFQKLFNQGMILGEGNEKMSKSKGNVINPDDIVQSHGADTLRLYEMFMGPLDAAIAWSEKGLDGSRRFLDRVWRLMVNEDGTLSSKIVTTNNKSLDKVYNQTVKKVTEDFETLGFNTAISQLMVFINECYKVDEVYKPYIEGFVKMLAPIAPHIGEELWSKLGHEESITYQPWPTYDEALLVDDEVEIVVQVNGKLRAKIKIAKDTSKEEMQEIALSNDNVKASIEGKDIMKVIAVPQKLVNIVAK</sequence>
<organism>
    <name type="scientific">Staphylococcus aureus (strain Newman)</name>
    <dbReference type="NCBI Taxonomy" id="426430"/>
    <lineage>
        <taxon>Bacteria</taxon>
        <taxon>Bacillati</taxon>
        <taxon>Bacillota</taxon>
        <taxon>Bacilli</taxon>
        <taxon>Bacillales</taxon>
        <taxon>Staphylococcaceae</taxon>
        <taxon>Staphylococcus</taxon>
    </lineage>
</organism>
<comment type="catalytic activity">
    <reaction evidence="1">
        <text>tRNA(Leu) + L-leucine + ATP = L-leucyl-tRNA(Leu) + AMP + diphosphate</text>
        <dbReference type="Rhea" id="RHEA:11688"/>
        <dbReference type="Rhea" id="RHEA-COMP:9613"/>
        <dbReference type="Rhea" id="RHEA-COMP:9622"/>
        <dbReference type="ChEBI" id="CHEBI:30616"/>
        <dbReference type="ChEBI" id="CHEBI:33019"/>
        <dbReference type="ChEBI" id="CHEBI:57427"/>
        <dbReference type="ChEBI" id="CHEBI:78442"/>
        <dbReference type="ChEBI" id="CHEBI:78494"/>
        <dbReference type="ChEBI" id="CHEBI:456215"/>
        <dbReference type="EC" id="6.1.1.4"/>
    </reaction>
</comment>
<comment type="subcellular location">
    <subcellularLocation>
        <location evidence="1">Cytoplasm</location>
    </subcellularLocation>
</comment>
<comment type="similarity">
    <text evidence="1">Belongs to the class-I aminoacyl-tRNA synthetase family.</text>
</comment>
<reference key="1">
    <citation type="journal article" date="2008" name="J. Bacteriol.">
        <title>Genome sequence of Staphylococcus aureus strain Newman and comparative analysis of staphylococcal genomes: polymorphism and evolution of two major pathogenicity islands.</title>
        <authorList>
            <person name="Baba T."/>
            <person name="Bae T."/>
            <person name="Schneewind O."/>
            <person name="Takeuchi F."/>
            <person name="Hiramatsu K."/>
        </authorList>
    </citation>
    <scope>NUCLEOTIDE SEQUENCE [LARGE SCALE GENOMIC DNA]</scope>
    <source>
        <strain>Newman</strain>
    </source>
</reference>
<evidence type="ECO:0000255" key="1">
    <source>
        <dbReference type="HAMAP-Rule" id="MF_00049"/>
    </source>
</evidence>
<gene>
    <name evidence="1" type="primary">leuS</name>
    <name type="ordered locus">NWMN_1651</name>
</gene>
<accession>A6QHU1</accession>
<name>SYL_STAAE</name>
<feature type="chain" id="PRO_1000071113" description="Leucine--tRNA ligase">
    <location>
        <begin position="1"/>
        <end position="805"/>
    </location>
</feature>
<feature type="short sequence motif" description="'HIGH' region">
    <location>
        <begin position="41"/>
        <end position="52"/>
    </location>
</feature>
<feature type="short sequence motif" description="'KMSKS' region">
    <location>
        <begin position="577"/>
        <end position="581"/>
    </location>
</feature>
<feature type="binding site" evidence="1">
    <location>
        <position position="580"/>
    </location>
    <ligand>
        <name>ATP</name>
        <dbReference type="ChEBI" id="CHEBI:30616"/>
    </ligand>
</feature>
<keyword id="KW-0030">Aminoacyl-tRNA synthetase</keyword>
<keyword id="KW-0067">ATP-binding</keyword>
<keyword id="KW-0963">Cytoplasm</keyword>
<keyword id="KW-0436">Ligase</keyword>
<keyword id="KW-0547">Nucleotide-binding</keyword>
<keyword id="KW-0648">Protein biosynthesis</keyword>